<comment type="function">
    <text evidence="1">Part of the Sec protein translocase complex. Interacts with the SecYEG preprotein conducting channel. Has a central role in coupling the hydrolysis of ATP to the transfer of proteins into and across the cell membrane, serving as an ATP-driven molecular motor driving the stepwise translocation of polypeptide chains across the membrane.</text>
</comment>
<comment type="catalytic activity">
    <reaction evidence="1">
        <text>ATP + H2O + cellular proteinSide 1 = ADP + phosphate + cellular proteinSide 2.</text>
        <dbReference type="EC" id="7.4.2.8"/>
    </reaction>
</comment>
<comment type="subunit">
    <text evidence="1">Monomer and homodimer. Part of the essential Sec protein translocation apparatus which comprises SecA, SecYEG and auxiliary proteins SecDF. Other proteins may also be involved.</text>
</comment>
<comment type="subcellular location">
    <subcellularLocation>
        <location evidence="1">Cell inner membrane</location>
        <topology evidence="1">Peripheral membrane protein</topology>
        <orientation evidence="1">Cytoplasmic side</orientation>
    </subcellularLocation>
    <subcellularLocation>
        <location evidence="1">Cytoplasm</location>
    </subcellularLocation>
    <text evidence="1">Distribution is 50-50.</text>
</comment>
<comment type="similarity">
    <text evidence="1">Belongs to the SecA family.</text>
</comment>
<protein>
    <recommendedName>
        <fullName evidence="1">Protein translocase subunit SecA</fullName>
        <ecNumber evidence="1">7.4.2.8</ecNumber>
    </recommendedName>
</protein>
<proteinExistence type="inferred from homology"/>
<organism>
    <name type="scientific">Christiangramia forsetii (strain DSM 17595 / CGMCC 1.15422 / KT0803)</name>
    <name type="common">Gramella forsetii</name>
    <dbReference type="NCBI Taxonomy" id="411154"/>
    <lineage>
        <taxon>Bacteria</taxon>
        <taxon>Pseudomonadati</taxon>
        <taxon>Bacteroidota</taxon>
        <taxon>Flavobacteriia</taxon>
        <taxon>Flavobacteriales</taxon>
        <taxon>Flavobacteriaceae</taxon>
        <taxon>Christiangramia</taxon>
    </lineage>
</organism>
<accession>A0LYR8</accession>
<keyword id="KW-0067">ATP-binding</keyword>
<keyword id="KW-0997">Cell inner membrane</keyword>
<keyword id="KW-1003">Cell membrane</keyword>
<keyword id="KW-0963">Cytoplasm</keyword>
<keyword id="KW-0472">Membrane</keyword>
<keyword id="KW-0547">Nucleotide-binding</keyword>
<keyword id="KW-0653">Protein transport</keyword>
<keyword id="KW-1278">Translocase</keyword>
<keyword id="KW-0811">Translocation</keyword>
<keyword id="KW-0813">Transport</keyword>
<dbReference type="EC" id="7.4.2.8" evidence="1"/>
<dbReference type="EMBL" id="CU207366">
    <property type="protein sequence ID" value="CAL65513.1"/>
    <property type="molecule type" value="Genomic_DNA"/>
</dbReference>
<dbReference type="RefSeq" id="WP_011708451.1">
    <property type="nucleotide sequence ID" value="NC_008571.1"/>
</dbReference>
<dbReference type="SMR" id="A0LYR8"/>
<dbReference type="STRING" id="411154.GFO_0530"/>
<dbReference type="KEGG" id="gfo:GFO_0530"/>
<dbReference type="eggNOG" id="COG0653">
    <property type="taxonomic scope" value="Bacteria"/>
</dbReference>
<dbReference type="HOGENOM" id="CLU_005314_3_0_10"/>
<dbReference type="OrthoDB" id="9805579at2"/>
<dbReference type="Proteomes" id="UP000000755">
    <property type="component" value="Chromosome"/>
</dbReference>
<dbReference type="GO" id="GO:0031522">
    <property type="term" value="C:cell envelope Sec protein transport complex"/>
    <property type="evidence" value="ECO:0007669"/>
    <property type="project" value="TreeGrafter"/>
</dbReference>
<dbReference type="GO" id="GO:0005829">
    <property type="term" value="C:cytosol"/>
    <property type="evidence" value="ECO:0007669"/>
    <property type="project" value="TreeGrafter"/>
</dbReference>
<dbReference type="GO" id="GO:0005886">
    <property type="term" value="C:plasma membrane"/>
    <property type="evidence" value="ECO:0007669"/>
    <property type="project" value="UniProtKB-SubCell"/>
</dbReference>
<dbReference type="GO" id="GO:0005524">
    <property type="term" value="F:ATP binding"/>
    <property type="evidence" value="ECO:0007669"/>
    <property type="project" value="UniProtKB-UniRule"/>
</dbReference>
<dbReference type="GO" id="GO:0008564">
    <property type="term" value="F:protein-exporting ATPase activity"/>
    <property type="evidence" value="ECO:0007669"/>
    <property type="project" value="UniProtKB-EC"/>
</dbReference>
<dbReference type="GO" id="GO:0065002">
    <property type="term" value="P:intracellular protein transmembrane transport"/>
    <property type="evidence" value="ECO:0007669"/>
    <property type="project" value="UniProtKB-UniRule"/>
</dbReference>
<dbReference type="GO" id="GO:0017038">
    <property type="term" value="P:protein import"/>
    <property type="evidence" value="ECO:0007669"/>
    <property type="project" value="InterPro"/>
</dbReference>
<dbReference type="GO" id="GO:0006605">
    <property type="term" value="P:protein targeting"/>
    <property type="evidence" value="ECO:0007669"/>
    <property type="project" value="UniProtKB-UniRule"/>
</dbReference>
<dbReference type="GO" id="GO:0043952">
    <property type="term" value="P:protein transport by the Sec complex"/>
    <property type="evidence" value="ECO:0007669"/>
    <property type="project" value="TreeGrafter"/>
</dbReference>
<dbReference type="CDD" id="cd17928">
    <property type="entry name" value="DEXDc_SecA"/>
    <property type="match status" value="1"/>
</dbReference>
<dbReference type="CDD" id="cd18803">
    <property type="entry name" value="SF2_C_secA"/>
    <property type="match status" value="1"/>
</dbReference>
<dbReference type="FunFam" id="3.40.50.300:FF:000246">
    <property type="entry name" value="Preprotein translocase subunit SecA"/>
    <property type="match status" value="1"/>
</dbReference>
<dbReference type="FunFam" id="3.40.50.300:FF:000694">
    <property type="entry name" value="Preprotein translocase subunit SecA"/>
    <property type="match status" value="1"/>
</dbReference>
<dbReference type="Gene3D" id="1.10.3060.10">
    <property type="entry name" value="Helical scaffold and wing domains of SecA"/>
    <property type="match status" value="1"/>
</dbReference>
<dbReference type="Gene3D" id="3.40.50.300">
    <property type="entry name" value="P-loop containing nucleotide triphosphate hydrolases"/>
    <property type="match status" value="3"/>
</dbReference>
<dbReference type="Gene3D" id="3.90.1440.10">
    <property type="entry name" value="SecA, preprotein cross-linking domain"/>
    <property type="match status" value="1"/>
</dbReference>
<dbReference type="HAMAP" id="MF_01382">
    <property type="entry name" value="SecA"/>
    <property type="match status" value="1"/>
</dbReference>
<dbReference type="InterPro" id="IPR014001">
    <property type="entry name" value="Helicase_ATP-bd"/>
</dbReference>
<dbReference type="InterPro" id="IPR001650">
    <property type="entry name" value="Helicase_C-like"/>
</dbReference>
<dbReference type="InterPro" id="IPR027417">
    <property type="entry name" value="P-loop_NTPase"/>
</dbReference>
<dbReference type="InterPro" id="IPR000185">
    <property type="entry name" value="SecA"/>
</dbReference>
<dbReference type="InterPro" id="IPR020937">
    <property type="entry name" value="SecA_CS"/>
</dbReference>
<dbReference type="InterPro" id="IPR011115">
    <property type="entry name" value="SecA_DEAD"/>
</dbReference>
<dbReference type="InterPro" id="IPR014018">
    <property type="entry name" value="SecA_motor_DEAD"/>
</dbReference>
<dbReference type="InterPro" id="IPR011130">
    <property type="entry name" value="SecA_preprotein_X-link_dom"/>
</dbReference>
<dbReference type="InterPro" id="IPR044722">
    <property type="entry name" value="SecA_SF2_C"/>
</dbReference>
<dbReference type="InterPro" id="IPR011116">
    <property type="entry name" value="SecA_Wing/Scaffold"/>
</dbReference>
<dbReference type="InterPro" id="IPR036266">
    <property type="entry name" value="SecA_Wing/Scaffold_sf"/>
</dbReference>
<dbReference type="InterPro" id="IPR036670">
    <property type="entry name" value="SecA_X-link_sf"/>
</dbReference>
<dbReference type="NCBIfam" id="NF009536">
    <property type="entry name" value="PRK12901.1"/>
    <property type="match status" value="1"/>
</dbReference>
<dbReference type="NCBIfam" id="TIGR00963">
    <property type="entry name" value="secA"/>
    <property type="match status" value="1"/>
</dbReference>
<dbReference type="PANTHER" id="PTHR30612:SF0">
    <property type="entry name" value="CHLOROPLAST PROTEIN-TRANSPORTING ATPASE"/>
    <property type="match status" value="1"/>
</dbReference>
<dbReference type="PANTHER" id="PTHR30612">
    <property type="entry name" value="SECA INNER MEMBRANE COMPONENT OF SEC PROTEIN SECRETION SYSTEM"/>
    <property type="match status" value="1"/>
</dbReference>
<dbReference type="Pfam" id="PF21090">
    <property type="entry name" value="P-loop_SecA"/>
    <property type="match status" value="2"/>
</dbReference>
<dbReference type="Pfam" id="PF07517">
    <property type="entry name" value="SecA_DEAD"/>
    <property type="match status" value="1"/>
</dbReference>
<dbReference type="Pfam" id="PF01043">
    <property type="entry name" value="SecA_PP_bind"/>
    <property type="match status" value="1"/>
</dbReference>
<dbReference type="Pfam" id="PF07516">
    <property type="entry name" value="SecA_SW"/>
    <property type="match status" value="1"/>
</dbReference>
<dbReference type="PRINTS" id="PR00906">
    <property type="entry name" value="SECA"/>
</dbReference>
<dbReference type="SMART" id="SM00957">
    <property type="entry name" value="SecA_DEAD"/>
    <property type="match status" value="1"/>
</dbReference>
<dbReference type="SMART" id="SM00958">
    <property type="entry name" value="SecA_PP_bind"/>
    <property type="match status" value="1"/>
</dbReference>
<dbReference type="SUPFAM" id="SSF81886">
    <property type="entry name" value="Helical scaffold and wing domains of SecA"/>
    <property type="match status" value="1"/>
</dbReference>
<dbReference type="SUPFAM" id="SSF52540">
    <property type="entry name" value="P-loop containing nucleoside triphosphate hydrolases"/>
    <property type="match status" value="2"/>
</dbReference>
<dbReference type="SUPFAM" id="SSF81767">
    <property type="entry name" value="Pre-protein crosslinking domain of SecA"/>
    <property type="match status" value="1"/>
</dbReference>
<dbReference type="PROSITE" id="PS01312">
    <property type="entry name" value="SECA"/>
    <property type="match status" value="1"/>
</dbReference>
<dbReference type="PROSITE" id="PS51196">
    <property type="entry name" value="SECA_MOTOR_DEAD"/>
    <property type="match status" value="1"/>
</dbReference>
<evidence type="ECO:0000255" key="1">
    <source>
        <dbReference type="HAMAP-Rule" id="MF_01382"/>
    </source>
</evidence>
<evidence type="ECO:0000256" key="2">
    <source>
        <dbReference type="SAM" id="MobiDB-lite"/>
    </source>
</evidence>
<reference key="1">
    <citation type="journal article" date="2006" name="Environ. Microbiol.">
        <title>Whole genome analysis of the marine Bacteroidetes'Gramella forsetii' reveals adaptations to degradation of polymeric organic matter.</title>
        <authorList>
            <person name="Bauer M."/>
            <person name="Kube M."/>
            <person name="Teeling H."/>
            <person name="Richter M."/>
            <person name="Lombardot T."/>
            <person name="Allers E."/>
            <person name="Wuerdemann C.A."/>
            <person name="Quast C."/>
            <person name="Kuhl H."/>
            <person name="Knaust F."/>
            <person name="Woebken D."/>
            <person name="Bischof K."/>
            <person name="Mussmann M."/>
            <person name="Choudhuri J.V."/>
            <person name="Meyer F."/>
            <person name="Reinhardt R."/>
            <person name="Amann R.I."/>
            <person name="Gloeckner F.O."/>
        </authorList>
    </citation>
    <scope>NUCLEOTIDE SEQUENCE [LARGE SCALE GENOMIC DNA]</scope>
    <source>
        <strain>DSM 17595 / CGMCC 1.15422 / KT0803</strain>
    </source>
</reference>
<sequence length="1119" mass="127561">MSFLDSVLKAFVGDKSKKDVKEIQPIVNKIKALESEFEALSLDELRAKTSEFKAKIAEATKEVEDKIVALNKEADEIDDITRKEDIYAEVDALKEKSYEISEAVLNDILPEAFATVKETAKRFVNNTQLKVKASSFDREISAEKDYVTLEDDHAIWSNSWDAAGKPVTWDMVHYDVQLIGGVAMHQGKIAEMQTGEGKTLVATLPMYLNALTGNGVHLVTVNDYLAKRDSAWMAPIFQFHGMSVDCVDYHRPNSAARRKAYNADITYGTNNEFGFDYLRDNMSHAPDDLVQRPHNYAIVDEVDSVLVDDARTPLIISGPVPKGDTHEFMELKPAIANIVEVQRKHLVKVLSEAKKLIKEGDTKEGGFQLLRVYRGLPKNKALIKFLSEEGIKQLLQKTENHYMQDNNREMPKVDAELYFTIEEKSNQIDLTDKGIEFLSGKDEPDFFVMPEIGMEIAKIEKEGFPAEEEAEKKEELFRDYSVKSERIHTLRQLLKSYTLFEKDTEYVVIDNKVKIVDEQTGRIMEGRRYSDGLHQAIEAKENVKIEDATQTFATVTLQNYFRMYGKLSGMTGTAVTEAGELWEIYKLDVVEIPTNRPIARNDKEDLVYKTKREKYNAVIDHVTDLSNAGRPVLIGTTSVEISELLSRMLKLRNVPHNVLNAKRHKQEADIVAEAGNSGIVTIATNMAGRGTDIKLSKEVKEAGGLAIVGTERHDSRRVDRQLRGRAGRQGDPGSSQFYVSLEDNLMRLFGSERIAKLMDRMGLEEGEVIQHSMISKSIERAQKKVEENNFGVRKRLLEYDDVMNAQREVIYKRRYHALFGERLRVDLANMIFDISESITETNKAAEDFKNFEFELIRNFSMSSPVSEEEFKKMNAQKLAGEVYKSAYKHYDEKMSHNAERAFPVIKQVHEDERNNFERISVPFTDGTKTLSVVTNLEKAYETEGKQLIKDFEKNITLAIIDDAWKTHLRKMDELKQSVQLAVHEQKDPLLIYKFEAFELFKVMLENVNRDVMSFLFKGEIPSTGAPSIHEARQTKSKEKVETRKEEIPNMDERAAQSRAAGNTQRQQPEVTETIVRDRPKIGRNDKVTVKNVMSGESKTMKFKQAIPLLDKGDWVLVEE</sequence>
<gene>
    <name evidence="1" type="primary">secA</name>
    <name type="ordered locus">GFO_0530</name>
</gene>
<name>SECA_CHRFK</name>
<feature type="chain" id="PRO_0000320821" description="Protein translocase subunit SecA">
    <location>
        <begin position="1"/>
        <end position="1119"/>
    </location>
</feature>
<feature type="region of interest" description="Disordered" evidence="2">
    <location>
        <begin position="1025"/>
        <end position="1081"/>
    </location>
</feature>
<feature type="compositionally biased region" description="Basic and acidic residues" evidence="2">
    <location>
        <begin position="1029"/>
        <end position="1055"/>
    </location>
</feature>
<feature type="compositionally biased region" description="Polar residues" evidence="2">
    <location>
        <begin position="1059"/>
        <end position="1070"/>
    </location>
</feature>
<feature type="binding site" evidence="1">
    <location>
        <position position="177"/>
    </location>
    <ligand>
        <name>ATP</name>
        <dbReference type="ChEBI" id="CHEBI:30616"/>
    </ligand>
</feature>
<feature type="binding site" evidence="1">
    <location>
        <begin position="195"/>
        <end position="199"/>
    </location>
    <ligand>
        <name>ATP</name>
        <dbReference type="ChEBI" id="CHEBI:30616"/>
    </ligand>
</feature>
<feature type="binding site" evidence="1">
    <location>
        <position position="692"/>
    </location>
    <ligand>
        <name>ATP</name>
        <dbReference type="ChEBI" id="CHEBI:30616"/>
    </ligand>
</feature>